<keyword id="KW-0963">Cytoplasm</keyword>
<keyword id="KW-0255">Endonuclease</keyword>
<keyword id="KW-0378">Hydrolase</keyword>
<keyword id="KW-0460">Magnesium</keyword>
<keyword id="KW-0479">Metal-binding</keyword>
<keyword id="KW-0540">Nuclease</keyword>
<keyword id="KW-1185">Reference proteome</keyword>
<organism>
    <name type="scientific">Idiomarina loihiensis (strain ATCC BAA-735 / DSM 15497 / L2-TR)</name>
    <dbReference type="NCBI Taxonomy" id="283942"/>
    <lineage>
        <taxon>Bacteria</taxon>
        <taxon>Pseudomonadati</taxon>
        <taxon>Pseudomonadota</taxon>
        <taxon>Gammaproteobacteria</taxon>
        <taxon>Alteromonadales</taxon>
        <taxon>Idiomarinaceae</taxon>
        <taxon>Idiomarina</taxon>
    </lineage>
</organism>
<comment type="function">
    <text evidence="1">Endonuclease that specifically degrades the RNA of RNA-DNA hybrids.</text>
</comment>
<comment type="catalytic activity">
    <reaction evidence="1">
        <text>Endonucleolytic cleavage to 5'-phosphomonoester.</text>
        <dbReference type="EC" id="3.1.26.4"/>
    </reaction>
</comment>
<comment type="cofactor">
    <cofactor evidence="1">
        <name>Mg(2+)</name>
        <dbReference type="ChEBI" id="CHEBI:18420"/>
    </cofactor>
    <text evidence="1">Binds 1 Mg(2+) ion per subunit. May bind a second metal ion at a regulatory site, or after substrate binding.</text>
</comment>
<comment type="subunit">
    <text evidence="1">Monomer.</text>
</comment>
<comment type="subcellular location">
    <subcellularLocation>
        <location evidence="1">Cytoplasm</location>
    </subcellularLocation>
</comment>
<comment type="similarity">
    <text evidence="1">Belongs to the RNase H family.</text>
</comment>
<name>RNH_IDILO</name>
<gene>
    <name evidence="1" type="primary">rnhA</name>
    <name type="ordered locus">IL1694</name>
</gene>
<evidence type="ECO:0000255" key="1">
    <source>
        <dbReference type="HAMAP-Rule" id="MF_00042"/>
    </source>
</evidence>
<evidence type="ECO:0000255" key="2">
    <source>
        <dbReference type="PROSITE-ProRule" id="PRU00408"/>
    </source>
</evidence>
<feature type="chain" id="PRO_0000195381" description="Ribonuclease H">
    <location>
        <begin position="1"/>
        <end position="157"/>
    </location>
</feature>
<feature type="domain" description="RNase H type-1" evidence="2">
    <location>
        <begin position="3"/>
        <end position="144"/>
    </location>
</feature>
<feature type="binding site" evidence="1">
    <location>
        <position position="12"/>
    </location>
    <ligand>
        <name>Mg(2+)</name>
        <dbReference type="ChEBI" id="CHEBI:18420"/>
        <label>1</label>
    </ligand>
</feature>
<feature type="binding site" evidence="1">
    <location>
        <position position="12"/>
    </location>
    <ligand>
        <name>Mg(2+)</name>
        <dbReference type="ChEBI" id="CHEBI:18420"/>
        <label>2</label>
    </ligand>
</feature>
<feature type="binding site" evidence="1">
    <location>
        <position position="50"/>
    </location>
    <ligand>
        <name>Mg(2+)</name>
        <dbReference type="ChEBI" id="CHEBI:18420"/>
        <label>1</label>
    </ligand>
</feature>
<feature type="binding site" evidence="1">
    <location>
        <position position="72"/>
    </location>
    <ligand>
        <name>Mg(2+)</name>
        <dbReference type="ChEBI" id="CHEBI:18420"/>
        <label>1</label>
    </ligand>
</feature>
<feature type="binding site" evidence="1">
    <location>
        <position position="136"/>
    </location>
    <ligand>
        <name>Mg(2+)</name>
        <dbReference type="ChEBI" id="CHEBI:18420"/>
        <label>2</label>
    </ligand>
</feature>
<proteinExistence type="inferred from homology"/>
<reference key="1">
    <citation type="journal article" date="2004" name="Proc. Natl. Acad. Sci. U.S.A.">
        <title>Genome sequence of the deep-sea gamma-proteobacterium Idiomarina loihiensis reveals amino acid fermentation as a source of carbon and energy.</title>
        <authorList>
            <person name="Hou S."/>
            <person name="Saw J.H."/>
            <person name="Lee K.S."/>
            <person name="Freitas T.A."/>
            <person name="Belisle C."/>
            <person name="Kawarabayasi Y."/>
            <person name="Donachie S.P."/>
            <person name="Pikina A."/>
            <person name="Galperin M.Y."/>
            <person name="Koonin E.V."/>
            <person name="Makarova K.S."/>
            <person name="Omelchenko M.V."/>
            <person name="Sorokin A."/>
            <person name="Wolf Y.I."/>
            <person name="Li Q.X."/>
            <person name="Keum Y.S."/>
            <person name="Campbell S."/>
            <person name="Denery J."/>
            <person name="Aizawa S."/>
            <person name="Shibata S."/>
            <person name="Malahoff A."/>
            <person name="Alam M."/>
        </authorList>
    </citation>
    <scope>NUCLEOTIDE SEQUENCE [LARGE SCALE GENOMIC DNA]</scope>
    <source>
        <strain>ATCC BAA-735 / DSM 15497 / L2-TR</strain>
    </source>
</reference>
<dbReference type="EC" id="3.1.26.4" evidence="1"/>
<dbReference type="EMBL" id="AE017340">
    <property type="protein sequence ID" value="AAV82527.1"/>
    <property type="molecule type" value="Genomic_DNA"/>
</dbReference>
<dbReference type="RefSeq" id="WP_011234930.1">
    <property type="nucleotide sequence ID" value="NC_006512.1"/>
</dbReference>
<dbReference type="SMR" id="Q5QZL3"/>
<dbReference type="STRING" id="283942.IL1694"/>
<dbReference type="GeneID" id="41336869"/>
<dbReference type="KEGG" id="ilo:IL1694"/>
<dbReference type="eggNOG" id="COG0328">
    <property type="taxonomic scope" value="Bacteria"/>
</dbReference>
<dbReference type="HOGENOM" id="CLU_030894_6_0_6"/>
<dbReference type="OrthoDB" id="7845843at2"/>
<dbReference type="Proteomes" id="UP000001171">
    <property type="component" value="Chromosome"/>
</dbReference>
<dbReference type="GO" id="GO:0005737">
    <property type="term" value="C:cytoplasm"/>
    <property type="evidence" value="ECO:0007669"/>
    <property type="project" value="UniProtKB-SubCell"/>
</dbReference>
<dbReference type="GO" id="GO:0000287">
    <property type="term" value="F:magnesium ion binding"/>
    <property type="evidence" value="ECO:0007669"/>
    <property type="project" value="UniProtKB-UniRule"/>
</dbReference>
<dbReference type="GO" id="GO:0003676">
    <property type="term" value="F:nucleic acid binding"/>
    <property type="evidence" value="ECO:0007669"/>
    <property type="project" value="InterPro"/>
</dbReference>
<dbReference type="GO" id="GO:0004523">
    <property type="term" value="F:RNA-DNA hybrid ribonuclease activity"/>
    <property type="evidence" value="ECO:0007669"/>
    <property type="project" value="UniProtKB-UniRule"/>
</dbReference>
<dbReference type="GO" id="GO:0043137">
    <property type="term" value="P:DNA replication, removal of RNA primer"/>
    <property type="evidence" value="ECO:0007669"/>
    <property type="project" value="TreeGrafter"/>
</dbReference>
<dbReference type="CDD" id="cd09278">
    <property type="entry name" value="RNase_HI_prokaryote_like"/>
    <property type="match status" value="1"/>
</dbReference>
<dbReference type="FunFam" id="3.30.420.10:FF:000008">
    <property type="entry name" value="Ribonuclease H"/>
    <property type="match status" value="1"/>
</dbReference>
<dbReference type="Gene3D" id="3.30.420.10">
    <property type="entry name" value="Ribonuclease H-like superfamily/Ribonuclease H"/>
    <property type="match status" value="1"/>
</dbReference>
<dbReference type="HAMAP" id="MF_00042">
    <property type="entry name" value="RNase_H"/>
    <property type="match status" value="1"/>
</dbReference>
<dbReference type="InterPro" id="IPR050092">
    <property type="entry name" value="RNase_H"/>
</dbReference>
<dbReference type="InterPro" id="IPR012337">
    <property type="entry name" value="RNaseH-like_sf"/>
</dbReference>
<dbReference type="InterPro" id="IPR002156">
    <property type="entry name" value="RNaseH_domain"/>
</dbReference>
<dbReference type="InterPro" id="IPR036397">
    <property type="entry name" value="RNaseH_sf"/>
</dbReference>
<dbReference type="InterPro" id="IPR022892">
    <property type="entry name" value="RNaseHI"/>
</dbReference>
<dbReference type="NCBIfam" id="NF001236">
    <property type="entry name" value="PRK00203.1"/>
    <property type="match status" value="1"/>
</dbReference>
<dbReference type="PANTHER" id="PTHR10642">
    <property type="entry name" value="RIBONUCLEASE H1"/>
    <property type="match status" value="1"/>
</dbReference>
<dbReference type="PANTHER" id="PTHR10642:SF26">
    <property type="entry name" value="RIBONUCLEASE H1"/>
    <property type="match status" value="1"/>
</dbReference>
<dbReference type="Pfam" id="PF00075">
    <property type="entry name" value="RNase_H"/>
    <property type="match status" value="1"/>
</dbReference>
<dbReference type="SUPFAM" id="SSF53098">
    <property type="entry name" value="Ribonuclease H-like"/>
    <property type="match status" value="1"/>
</dbReference>
<dbReference type="PROSITE" id="PS50879">
    <property type="entry name" value="RNASE_H_1"/>
    <property type="match status" value="1"/>
</dbReference>
<accession>Q5QZL3</accession>
<protein>
    <recommendedName>
        <fullName evidence="1">Ribonuclease H</fullName>
        <shortName evidence="1">RNase H</shortName>
        <ecNumber evidence="1">3.1.26.4</ecNumber>
    </recommendedName>
</protein>
<sequence length="157" mass="18079">MSNSKTVHLYTDGSCLGNPGPGGYGAVLEYGKHHKELSQGYRLTTNNRMEMLATIAGLRELKRSCHVILTTDSQYVKQGVEQWMHRWKQNGWRTSARKAVKNKDLWQQLDEEVNRHKVEWKWIKGHSGHKQNERCDELARDAATREPMLEDEGFGGE</sequence>